<name>PURQ_THET2</name>
<accession>Q72IH9</accession>
<proteinExistence type="inferred from homology"/>
<keyword id="KW-0067">ATP-binding</keyword>
<keyword id="KW-0963">Cytoplasm</keyword>
<keyword id="KW-0315">Glutamine amidotransferase</keyword>
<keyword id="KW-0378">Hydrolase</keyword>
<keyword id="KW-0436">Ligase</keyword>
<keyword id="KW-0547">Nucleotide-binding</keyword>
<keyword id="KW-0658">Purine biosynthesis</keyword>
<reference key="1">
    <citation type="journal article" date="2004" name="Nat. Biotechnol.">
        <title>The genome sequence of the extreme thermophile Thermus thermophilus.</title>
        <authorList>
            <person name="Henne A."/>
            <person name="Brueggemann H."/>
            <person name="Raasch C."/>
            <person name="Wiezer A."/>
            <person name="Hartsch T."/>
            <person name="Liesegang H."/>
            <person name="Johann A."/>
            <person name="Lienard T."/>
            <person name="Gohl O."/>
            <person name="Martinez-Arias R."/>
            <person name="Jacobi C."/>
            <person name="Starkuviene V."/>
            <person name="Schlenczeck S."/>
            <person name="Dencker S."/>
            <person name="Huber R."/>
            <person name="Klenk H.-P."/>
            <person name="Kramer W."/>
            <person name="Merkl R."/>
            <person name="Gottschalk G."/>
            <person name="Fritz H.-J."/>
        </authorList>
    </citation>
    <scope>NUCLEOTIDE SEQUENCE [LARGE SCALE GENOMIC DNA]</scope>
    <source>
        <strain>ATCC BAA-163 / DSM 7039 / HB27</strain>
    </source>
</reference>
<gene>
    <name evidence="1" type="primary">purQ</name>
    <name type="ordered locus">TT_C1153</name>
</gene>
<comment type="function">
    <text evidence="1">Part of the phosphoribosylformylglycinamidine synthase complex involved in the purines biosynthetic pathway. Catalyzes the ATP-dependent conversion of formylglycinamide ribonucleotide (FGAR) and glutamine to yield formylglycinamidine ribonucleotide (FGAM) and glutamate. The FGAM synthase complex is composed of three subunits. PurQ produces an ammonia molecule by converting glutamine to glutamate. PurL transfers the ammonia molecule to FGAR to form FGAM in an ATP-dependent manner. PurS interacts with PurQ and PurL and is thought to assist in the transfer of the ammonia molecule from PurQ to PurL.</text>
</comment>
<comment type="catalytic activity">
    <reaction evidence="1">
        <text>N(2)-formyl-N(1)-(5-phospho-beta-D-ribosyl)glycinamide + L-glutamine + ATP + H2O = 2-formamido-N(1)-(5-O-phospho-beta-D-ribosyl)acetamidine + L-glutamate + ADP + phosphate + H(+)</text>
        <dbReference type="Rhea" id="RHEA:17129"/>
        <dbReference type="ChEBI" id="CHEBI:15377"/>
        <dbReference type="ChEBI" id="CHEBI:15378"/>
        <dbReference type="ChEBI" id="CHEBI:29985"/>
        <dbReference type="ChEBI" id="CHEBI:30616"/>
        <dbReference type="ChEBI" id="CHEBI:43474"/>
        <dbReference type="ChEBI" id="CHEBI:58359"/>
        <dbReference type="ChEBI" id="CHEBI:147286"/>
        <dbReference type="ChEBI" id="CHEBI:147287"/>
        <dbReference type="ChEBI" id="CHEBI:456216"/>
        <dbReference type="EC" id="6.3.5.3"/>
    </reaction>
</comment>
<comment type="catalytic activity">
    <reaction evidence="1">
        <text>L-glutamine + H2O = L-glutamate + NH4(+)</text>
        <dbReference type="Rhea" id="RHEA:15889"/>
        <dbReference type="ChEBI" id="CHEBI:15377"/>
        <dbReference type="ChEBI" id="CHEBI:28938"/>
        <dbReference type="ChEBI" id="CHEBI:29985"/>
        <dbReference type="ChEBI" id="CHEBI:58359"/>
        <dbReference type="EC" id="3.5.1.2"/>
    </reaction>
</comment>
<comment type="pathway">
    <text evidence="1">Purine metabolism; IMP biosynthesis via de novo pathway; 5-amino-1-(5-phospho-D-ribosyl)imidazole from N(2)-formyl-N(1)-(5-phospho-D-ribosyl)glycinamide: step 1/2.</text>
</comment>
<comment type="subunit">
    <text evidence="1">Part of the FGAM synthase complex composed of 1 PurL, 1 PurQ and 2 PurS subunits.</text>
</comment>
<comment type="subcellular location">
    <subcellularLocation>
        <location evidence="1">Cytoplasm</location>
    </subcellularLocation>
</comment>
<protein>
    <recommendedName>
        <fullName evidence="1">Phosphoribosylformylglycinamidine synthase subunit PurQ</fullName>
        <shortName evidence="1">FGAM synthase</shortName>
        <ecNumber evidence="1">6.3.5.3</ecNumber>
    </recommendedName>
    <alternativeName>
        <fullName evidence="1">Formylglycinamide ribonucleotide amidotransferase subunit I</fullName>
        <shortName evidence="1">FGAR amidotransferase I</shortName>
        <shortName evidence="1">FGAR-AT I</shortName>
    </alternativeName>
    <alternativeName>
        <fullName evidence="1">Glutaminase PurQ</fullName>
        <ecNumber evidence="1">3.5.1.2</ecNumber>
    </alternativeName>
    <alternativeName>
        <fullName evidence="1">Phosphoribosylformylglycinamidine synthase subunit I</fullName>
    </alternativeName>
</protein>
<sequence length="227" mass="25107">MRWAIVRFPGANCDEDARFALEKAGIRAEFVWHTERDLRGFDGVFLPGGFSYGDYLRAGALAAKSPVMEAVRRFAEEGRYVVGVCNGFQILTEAGLLPGALLANLNLHFTCKEVGVRVERNDLPFTRLYPRGQVLRLPIAHGEGRYYADPETLARLEGEGLVVFRYAPLKDEADYNPNGSLHDIAGIVSEKGNVLGMMPHPERAVDEVLGNTDGLPFFLGLVREVAR</sequence>
<evidence type="ECO:0000255" key="1">
    <source>
        <dbReference type="HAMAP-Rule" id="MF_00421"/>
    </source>
</evidence>
<dbReference type="EC" id="6.3.5.3" evidence="1"/>
<dbReference type="EC" id="3.5.1.2" evidence="1"/>
<dbReference type="EMBL" id="AE017221">
    <property type="protein sequence ID" value="AAS81495.1"/>
    <property type="molecule type" value="Genomic_DNA"/>
</dbReference>
<dbReference type="RefSeq" id="WP_011173564.1">
    <property type="nucleotide sequence ID" value="NC_005835.1"/>
</dbReference>
<dbReference type="SMR" id="Q72IH9"/>
<dbReference type="KEGG" id="tth:TT_C1153"/>
<dbReference type="eggNOG" id="COG0047">
    <property type="taxonomic scope" value="Bacteria"/>
</dbReference>
<dbReference type="HOGENOM" id="CLU_001031_3_1_0"/>
<dbReference type="OrthoDB" id="9804441at2"/>
<dbReference type="UniPathway" id="UPA00074">
    <property type="reaction ID" value="UER00128"/>
</dbReference>
<dbReference type="Proteomes" id="UP000000592">
    <property type="component" value="Chromosome"/>
</dbReference>
<dbReference type="GO" id="GO:0005737">
    <property type="term" value="C:cytoplasm"/>
    <property type="evidence" value="ECO:0007669"/>
    <property type="project" value="UniProtKB-SubCell"/>
</dbReference>
<dbReference type="GO" id="GO:0005524">
    <property type="term" value="F:ATP binding"/>
    <property type="evidence" value="ECO:0007669"/>
    <property type="project" value="UniProtKB-KW"/>
</dbReference>
<dbReference type="GO" id="GO:0004359">
    <property type="term" value="F:glutaminase activity"/>
    <property type="evidence" value="ECO:0007669"/>
    <property type="project" value="UniProtKB-EC"/>
</dbReference>
<dbReference type="GO" id="GO:0004642">
    <property type="term" value="F:phosphoribosylformylglycinamidine synthase activity"/>
    <property type="evidence" value="ECO:0007669"/>
    <property type="project" value="UniProtKB-UniRule"/>
</dbReference>
<dbReference type="GO" id="GO:0006189">
    <property type="term" value="P:'de novo' IMP biosynthetic process"/>
    <property type="evidence" value="ECO:0007669"/>
    <property type="project" value="UniProtKB-UniRule"/>
</dbReference>
<dbReference type="CDD" id="cd01740">
    <property type="entry name" value="GATase1_FGAR_AT"/>
    <property type="match status" value="1"/>
</dbReference>
<dbReference type="Gene3D" id="3.40.50.880">
    <property type="match status" value="1"/>
</dbReference>
<dbReference type="HAMAP" id="MF_00421">
    <property type="entry name" value="PurQ"/>
    <property type="match status" value="1"/>
</dbReference>
<dbReference type="InterPro" id="IPR029062">
    <property type="entry name" value="Class_I_gatase-like"/>
</dbReference>
<dbReference type="InterPro" id="IPR010075">
    <property type="entry name" value="PRibForGlyAmidine_synth_PurQ"/>
</dbReference>
<dbReference type="NCBIfam" id="TIGR01737">
    <property type="entry name" value="FGAM_synth_I"/>
    <property type="match status" value="1"/>
</dbReference>
<dbReference type="NCBIfam" id="NF002957">
    <property type="entry name" value="PRK03619.1"/>
    <property type="match status" value="1"/>
</dbReference>
<dbReference type="PANTHER" id="PTHR47552">
    <property type="entry name" value="PHOSPHORIBOSYLFORMYLGLYCINAMIDINE SYNTHASE SUBUNIT PURQ"/>
    <property type="match status" value="1"/>
</dbReference>
<dbReference type="PANTHER" id="PTHR47552:SF1">
    <property type="entry name" value="PHOSPHORIBOSYLFORMYLGLYCINAMIDINE SYNTHASE SUBUNIT PURQ"/>
    <property type="match status" value="1"/>
</dbReference>
<dbReference type="Pfam" id="PF13507">
    <property type="entry name" value="GATase_5"/>
    <property type="match status" value="1"/>
</dbReference>
<dbReference type="PIRSF" id="PIRSF001586">
    <property type="entry name" value="FGAM_synth_I"/>
    <property type="match status" value="1"/>
</dbReference>
<dbReference type="SMART" id="SM01211">
    <property type="entry name" value="GATase_5"/>
    <property type="match status" value="1"/>
</dbReference>
<dbReference type="SUPFAM" id="SSF52317">
    <property type="entry name" value="Class I glutamine amidotransferase-like"/>
    <property type="match status" value="1"/>
</dbReference>
<dbReference type="PROSITE" id="PS51273">
    <property type="entry name" value="GATASE_TYPE_1"/>
    <property type="match status" value="1"/>
</dbReference>
<organism>
    <name type="scientific">Thermus thermophilus (strain ATCC BAA-163 / DSM 7039 / HB27)</name>
    <dbReference type="NCBI Taxonomy" id="262724"/>
    <lineage>
        <taxon>Bacteria</taxon>
        <taxon>Thermotogati</taxon>
        <taxon>Deinococcota</taxon>
        <taxon>Deinococci</taxon>
        <taxon>Thermales</taxon>
        <taxon>Thermaceae</taxon>
        <taxon>Thermus</taxon>
    </lineage>
</organism>
<feature type="chain" id="PRO_0000100599" description="Phosphoribosylformylglycinamidine synthase subunit PurQ">
    <location>
        <begin position="1"/>
        <end position="227"/>
    </location>
</feature>
<feature type="domain" description="Glutamine amidotransferase type-1" evidence="1">
    <location>
        <begin position="2"/>
        <end position="227"/>
    </location>
</feature>
<feature type="active site" description="Nucleophile" evidence="1">
    <location>
        <position position="85"/>
    </location>
</feature>
<feature type="active site" evidence="1">
    <location>
        <position position="200"/>
    </location>
</feature>
<feature type="active site" evidence="1">
    <location>
        <position position="202"/>
    </location>
</feature>